<name>PYRG_PSEA6</name>
<accession>Q15QR7</accession>
<proteinExistence type="inferred from homology"/>
<sequence>MTNYIFVTGGVVSSLGKGIAAASLAAILEARGLNVTMLKLDPYINVDPGTMSPIQHGEVFVTDDGAETDLDLGHYERFIRTRMTKRNNFTTGRVYEEVIKRERRGDYLGATIQVIPHITNEIKRRIIAGAEGVDVAIVEIGGTVGDIESQPFLEAIRQLGTEVGRDHAMYMHLTLVPYIAVSGEVKTKPTQHSVKELRSIGIQPDILVCRSENALPSNERSKIALFTNVADKAVISLKDANSIYKIPAALKAQGMDELVVQRFGLECPEADLTEWEQVLYAESNPVGEVTIGMVGKYVELPDAYKSVNEALKHAGLKNRLTVNIRYVDSQDIESKGEQILHGLDAILVPGGFGERGIEGKIAAAKYAREQKVPYLGICLGMQVAIIEFARNVAGMESANSSEFDPQTPYPVVGLITEWLDADGSTAQRSEASDLGGTMRLGSQLCHLIPGSKVHDLYGSAEIYERHRHRYEVNNNLRDKLEASGLKVTGLSTDKRLVEVIELGDHPWFVAGQFHPEFNSTPRDGHPLFEGFVKAAGEYYKNNN</sequence>
<dbReference type="EC" id="6.3.4.2" evidence="1"/>
<dbReference type="EMBL" id="CP000388">
    <property type="protein sequence ID" value="ABG41771.1"/>
    <property type="molecule type" value="Genomic_DNA"/>
</dbReference>
<dbReference type="RefSeq" id="WP_011576001.1">
    <property type="nucleotide sequence ID" value="NC_008228.1"/>
</dbReference>
<dbReference type="SMR" id="Q15QR7"/>
<dbReference type="STRING" id="342610.Patl_3265"/>
<dbReference type="KEGG" id="pat:Patl_3265"/>
<dbReference type="eggNOG" id="COG0504">
    <property type="taxonomic scope" value="Bacteria"/>
</dbReference>
<dbReference type="HOGENOM" id="CLU_011675_5_0_6"/>
<dbReference type="OrthoDB" id="9801107at2"/>
<dbReference type="UniPathway" id="UPA00159">
    <property type="reaction ID" value="UER00277"/>
</dbReference>
<dbReference type="Proteomes" id="UP000001981">
    <property type="component" value="Chromosome"/>
</dbReference>
<dbReference type="GO" id="GO:0005829">
    <property type="term" value="C:cytosol"/>
    <property type="evidence" value="ECO:0007669"/>
    <property type="project" value="TreeGrafter"/>
</dbReference>
<dbReference type="GO" id="GO:0005524">
    <property type="term" value="F:ATP binding"/>
    <property type="evidence" value="ECO:0007669"/>
    <property type="project" value="UniProtKB-KW"/>
</dbReference>
<dbReference type="GO" id="GO:0003883">
    <property type="term" value="F:CTP synthase activity"/>
    <property type="evidence" value="ECO:0007669"/>
    <property type="project" value="UniProtKB-UniRule"/>
</dbReference>
<dbReference type="GO" id="GO:0004359">
    <property type="term" value="F:glutaminase activity"/>
    <property type="evidence" value="ECO:0007669"/>
    <property type="project" value="RHEA"/>
</dbReference>
<dbReference type="GO" id="GO:0042802">
    <property type="term" value="F:identical protein binding"/>
    <property type="evidence" value="ECO:0007669"/>
    <property type="project" value="TreeGrafter"/>
</dbReference>
<dbReference type="GO" id="GO:0046872">
    <property type="term" value="F:metal ion binding"/>
    <property type="evidence" value="ECO:0007669"/>
    <property type="project" value="UniProtKB-KW"/>
</dbReference>
<dbReference type="GO" id="GO:0044210">
    <property type="term" value="P:'de novo' CTP biosynthetic process"/>
    <property type="evidence" value="ECO:0007669"/>
    <property type="project" value="UniProtKB-UniRule"/>
</dbReference>
<dbReference type="GO" id="GO:0019856">
    <property type="term" value="P:pyrimidine nucleobase biosynthetic process"/>
    <property type="evidence" value="ECO:0007669"/>
    <property type="project" value="TreeGrafter"/>
</dbReference>
<dbReference type="CDD" id="cd03113">
    <property type="entry name" value="CTPS_N"/>
    <property type="match status" value="1"/>
</dbReference>
<dbReference type="CDD" id="cd01746">
    <property type="entry name" value="GATase1_CTP_Synthase"/>
    <property type="match status" value="1"/>
</dbReference>
<dbReference type="FunFam" id="3.40.50.300:FF:000009">
    <property type="entry name" value="CTP synthase"/>
    <property type="match status" value="1"/>
</dbReference>
<dbReference type="FunFam" id="3.40.50.880:FF:000002">
    <property type="entry name" value="CTP synthase"/>
    <property type="match status" value="1"/>
</dbReference>
<dbReference type="Gene3D" id="3.40.50.880">
    <property type="match status" value="1"/>
</dbReference>
<dbReference type="Gene3D" id="3.40.50.300">
    <property type="entry name" value="P-loop containing nucleotide triphosphate hydrolases"/>
    <property type="match status" value="1"/>
</dbReference>
<dbReference type="HAMAP" id="MF_01227">
    <property type="entry name" value="PyrG"/>
    <property type="match status" value="1"/>
</dbReference>
<dbReference type="InterPro" id="IPR029062">
    <property type="entry name" value="Class_I_gatase-like"/>
</dbReference>
<dbReference type="InterPro" id="IPR004468">
    <property type="entry name" value="CTP_synthase"/>
</dbReference>
<dbReference type="InterPro" id="IPR017456">
    <property type="entry name" value="CTP_synthase_N"/>
</dbReference>
<dbReference type="InterPro" id="IPR017926">
    <property type="entry name" value="GATASE"/>
</dbReference>
<dbReference type="InterPro" id="IPR033828">
    <property type="entry name" value="GATase1_CTP_Synthase"/>
</dbReference>
<dbReference type="InterPro" id="IPR027417">
    <property type="entry name" value="P-loop_NTPase"/>
</dbReference>
<dbReference type="NCBIfam" id="NF003792">
    <property type="entry name" value="PRK05380.1"/>
    <property type="match status" value="1"/>
</dbReference>
<dbReference type="NCBIfam" id="TIGR00337">
    <property type="entry name" value="PyrG"/>
    <property type="match status" value="1"/>
</dbReference>
<dbReference type="PANTHER" id="PTHR11550">
    <property type="entry name" value="CTP SYNTHASE"/>
    <property type="match status" value="1"/>
</dbReference>
<dbReference type="PANTHER" id="PTHR11550:SF0">
    <property type="entry name" value="CTP SYNTHASE-RELATED"/>
    <property type="match status" value="1"/>
</dbReference>
<dbReference type="Pfam" id="PF06418">
    <property type="entry name" value="CTP_synth_N"/>
    <property type="match status" value="1"/>
</dbReference>
<dbReference type="Pfam" id="PF00117">
    <property type="entry name" value="GATase"/>
    <property type="match status" value="1"/>
</dbReference>
<dbReference type="SUPFAM" id="SSF52317">
    <property type="entry name" value="Class I glutamine amidotransferase-like"/>
    <property type="match status" value="1"/>
</dbReference>
<dbReference type="SUPFAM" id="SSF52540">
    <property type="entry name" value="P-loop containing nucleoside triphosphate hydrolases"/>
    <property type="match status" value="1"/>
</dbReference>
<dbReference type="PROSITE" id="PS51273">
    <property type="entry name" value="GATASE_TYPE_1"/>
    <property type="match status" value="1"/>
</dbReference>
<evidence type="ECO:0000255" key="1">
    <source>
        <dbReference type="HAMAP-Rule" id="MF_01227"/>
    </source>
</evidence>
<reference key="1">
    <citation type="submission" date="2006-06" db="EMBL/GenBank/DDBJ databases">
        <title>Complete sequence of Pseudoalteromonas atlantica T6c.</title>
        <authorList>
            <consortium name="US DOE Joint Genome Institute"/>
            <person name="Copeland A."/>
            <person name="Lucas S."/>
            <person name="Lapidus A."/>
            <person name="Barry K."/>
            <person name="Detter J.C."/>
            <person name="Glavina del Rio T."/>
            <person name="Hammon N."/>
            <person name="Israni S."/>
            <person name="Dalin E."/>
            <person name="Tice H."/>
            <person name="Pitluck S."/>
            <person name="Saunders E."/>
            <person name="Brettin T."/>
            <person name="Bruce D."/>
            <person name="Han C."/>
            <person name="Tapia R."/>
            <person name="Gilna P."/>
            <person name="Schmutz J."/>
            <person name="Larimer F."/>
            <person name="Land M."/>
            <person name="Hauser L."/>
            <person name="Kyrpides N."/>
            <person name="Kim E."/>
            <person name="Karls A.C."/>
            <person name="Bartlett D."/>
            <person name="Higgins B.P."/>
            <person name="Richardson P."/>
        </authorList>
    </citation>
    <scope>NUCLEOTIDE SEQUENCE [LARGE SCALE GENOMIC DNA]</scope>
    <source>
        <strain>T6c / ATCC BAA-1087</strain>
    </source>
</reference>
<gene>
    <name evidence="1" type="primary">pyrG</name>
    <name type="ordered locus">Patl_3265</name>
</gene>
<organism>
    <name type="scientific">Pseudoalteromonas atlantica (strain T6c / ATCC BAA-1087)</name>
    <dbReference type="NCBI Taxonomy" id="3042615"/>
    <lineage>
        <taxon>Bacteria</taxon>
        <taxon>Pseudomonadati</taxon>
        <taxon>Pseudomonadota</taxon>
        <taxon>Gammaproteobacteria</taxon>
        <taxon>Alteromonadales</taxon>
        <taxon>Alteromonadaceae</taxon>
        <taxon>Paraglaciecola</taxon>
    </lineage>
</organism>
<keyword id="KW-0067">ATP-binding</keyword>
<keyword id="KW-0315">Glutamine amidotransferase</keyword>
<keyword id="KW-0436">Ligase</keyword>
<keyword id="KW-0460">Magnesium</keyword>
<keyword id="KW-0479">Metal-binding</keyword>
<keyword id="KW-0547">Nucleotide-binding</keyword>
<keyword id="KW-0665">Pyrimidine biosynthesis</keyword>
<protein>
    <recommendedName>
        <fullName evidence="1">CTP synthase</fullName>
        <ecNumber evidence="1">6.3.4.2</ecNumber>
    </recommendedName>
    <alternativeName>
        <fullName evidence="1">Cytidine 5'-triphosphate synthase</fullName>
    </alternativeName>
    <alternativeName>
        <fullName evidence="1">Cytidine triphosphate synthetase</fullName>
        <shortName evidence="1">CTP synthetase</shortName>
        <shortName evidence="1">CTPS</shortName>
    </alternativeName>
    <alternativeName>
        <fullName evidence="1">UTP--ammonia ligase</fullName>
    </alternativeName>
</protein>
<comment type="function">
    <text evidence="1">Catalyzes the ATP-dependent amination of UTP to CTP with either L-glutamine or ammonia as the source of nitrogen. Regulates intracellular CTP levels through interactions with the four ribonucleotide triphosphates.</text>
</comment>
<comment type="catalytic activity">
    <reaction evidence="1">
        <text>UTP + L-glutamine + ATP + H2O = CTP + L-glutamate + ADP + phosphate + 2 H(+)</text>
        <dbReference type="Rhea" id="RHEA:26426"/>
        <dbReference type="ChEBI" id="CHEBI:15377"/>
        <dbReference type="ChEBI" id="CHEBI:15378"/>
        <dbReference type="ChEBI" id="CHEBI:29985"/>
        <dbReference type="ChEBI" id="CHEBI:30616"/>
        <dbReference type="ChEBI" id="CHEBI:37563"/>
        <dbReference type="ChEBI" id="CHEBI:43474"/>
        <dbReference type="ChEBI" id="CHEBI:46398"/>
        <dbReference type="ChEBI" id="CHEBI:58359"/>
        <dbReference type="ChEBI" id="CHEBI:456216"/>
        <dbReference type="EC" id="6.3.4.2"/>
    </reaction>
</comment>
<comment type="catalytic activity">
    <reaction evidence="1">
        <text>L-glutamine + H2O = L-glutamate + NH4(+)</text>
        <dbReference type="Rhea" id="RHEA:15889"/>
        <dbReference type="ChEBI" id="CHEBI:15377"/>
        <dbReference type="ChEBI" id="CHEBI:28938"/>
        <dbReference type="ChEBI" id="CHEBI:29985"/>
        <dbReference type="ChEBI" id="CHEBI:58359"/>
    </reaction>
</comment>
<comment type="catalytic activity">
    <reaction evidence="1">
        <text>UTP + NH4(+) + ATP = CTP + ADP + phosphate + 2 H(+)</text>
        <dbReference type="Rhea" id="RHEA:16597"/>
        <dbReference type="ChEBI" id="CHEBI:15378"/>
        <dbReference type="ChEBI" id="CHEBI:28938"/>
        <dbReference type="ChEBI" id="CHEBI:30616"/>
        <dbReference type="ChEBI" id="CHEBI:37563"/>
        <dbReference type="ChEBI" id="CHEBI:43474"/>
        <dbReference type="ChEBI" id="CHEBI:46398"/>
        <dbReference type="ChEBI" id="CHEBI:456216"/>
    </reaction>
</comment>
<comment type="activity regulation">
    <text evidence="1">Allosterically activated by GTP, when glutamine is the substrate; GTP has no effect on the reaction when ammonia is the substrate. The allosteric effector GTP functions by stabilizing the protein conformation that binds the tetrahedral intermediate(s) formed during glutamine hydrolysis. Inhibited by the product CTP, via allosteric rather than competitive inhibition.</text>
</comment>
<comment type="pathway">
    <text evidence="1">Pyrimidine metabolism; CTP biosynthesis via de novo pathway; CTP from UDP: step 2/2.</text>
</comment>
<comment type="subunit">
    <text evidence="1">Homotetramer.</text>
</comment>
<comment type="miscellaneous">
    <text evidence="1">CTPSs have evolved a hybrid strategy for distinguishing between UTP and CTP. The overlapping regions of the product feedback inhibitory and substrate sites recognize a common feature in both compounds, the triphosphate moiety. To differentiate isosteric substrate and product pyrimidine rings, an additional pocket far from the expected kinase/ligase catalytic site, specifically recognizes the cytosine and ribose portions of the product inhibitor.</text>
</comment>
<comment type="similarity">
    <text evidence="1">Belongs to the CTP synthase family.</text>
</comment>
<feature type="chain" id="PRO_0000266183" description="CTP synthase">
    <location>
        <begin position="1"/>
        <end position="543"/>
    </location>
</feature>
<feature type="domain" description="Glutamine amidotransferase type-1" evidence="1">
    <location>
        <begin position="290"/>
        <end position="541"/>
    </location>
</feature>
<feature type="region of interest" description="Amidoligase domain" evidence="1">
    <location>
        <begin position="1"/>
        <end position="265"/>
    </location>
</feature>
<feature type="active site" description="Nucleophile; for glutamine hydrolysis" evidence="1">
    <location>
        <position position="378"/>
    </location>
</feature>
<feature type="active site" evidence="1">
    <location>
        <position position="514"/>
    </location>
</feature>
<feature type="active site" evidence="1">
    <location>
        <position position="516"/>
    </location>
</feature>
<feature type="binding site" evidence="1">
    <location>
        <position position="13"/>
    </location>
    <ligand>
        <name>CTP</name>
        <dbReference type="ChEBI" id="CHEBI:37563"/>
        <note>allosteric inhibitor</note>
    </ligand>
</feature>
<feature type="binding site" evidence="1">
    <location>
        <position position="13"/>
    </location>
    <ligand>
        <name>UTP</name>
        <dbReference type="ChEBI" id="CHEBI:46398"/>
    </ligand>
</feature>
<feature type="binding site" evidence="1">
    <location>
        <begin position="14"/>
        <end position="19"/>
    </location>
    <ligand>
        <name>ATP</name>
        <dbReference type="ChEBI" id="CHEBI:30616"/>
    </ligand>
</feature>
<feature type="binding site" evidence="1">
    <location>
        <position position="71"/>
    </location>
    <ligand>
        <name>ATP</name>
        <dbReference type="ChEBI" id="CHEBI:30616"/>
    </ligand>
</feature>
<feature type="binding site" evidence="1">
    <location>
        <position position="71"/>
    </location>
    <ligand>
        <name>Mg(2+)</name>
        <dbReference type="ChEBI" id="CHEBI:18420"/>
    </ligand>
</feature>
<feature type="binding site" evidence="1">
    <location>
        <position position="139"/>
    </location>
    <ligand>
        <name>Mg(2+)</name>
        <dbReference type="ChEBI" id="CHEBI:18420"/>
    </ligand>
</feature>
<feature type="binding site" evidence="1">
    <location>
        <begin position="146"/>
        <end position="148"/>
    </location>
    <ligand>
        <name>CTP</name>
        <dbReference type="ChEBI" id="CHEBI:37563"/>
        <note>allosteric inhibitor</note>
    </ligand>
</feature>
<feature type="binding site" evidence="1">
    <location>
        <begin position="186"/>
        <end position="191"/>
    </location>
    <ligand>
        <name>CTP</name>
        <dbReference type="ChEBI" id="CHEBI:37563"/>
        <note>allosteric inhibitor</note>
    </ligand>
</feature>
<feature type="binding site" evidence="1">
    <location>
        <begin position="186"/>
        <end position="191"/>
    </location>
    <ligand>
        <name>UTP</name>
        <dbReference type="ChEBI" id="CHEBI:46398"/>
    </ligand>
</feature>
<feature type="binding site" evidence="1">
    <location>
        <position position="222"/>
    </location>
    <ligand>
        <name>CTP</name>
        <dbReference type="ChEBI" id="CHEBI:37563"/>
        <note>allosteric inhibitor</note>
    </ligand>
</feature>
<feature type="binding site" evidence="1">
    <location>
        <position position="222"/>
    </location>
    <ligand>
        <name>UTP</name>
        <dbReference type="ChEBI" id="CHEBI:46398"/>
    </ligand>
</feature>
<feature type="binding site" evidence="1">
    <location>
        <begin position="238"/>
        <end position="240"/>
    </location>
    <ligand>
        <name>ATP</name>
        <dbReference type="ChEBI" id="CHEBI:30616"/>
    </ligand>
</feature>
<feature type="binding site" evidence="1">
    <location>
        <position position="351"/>
    </location>
    <ligand>
        <name>L-glutamine</name>
        <dbReference type="ChEBI" id="CHEBI:58359"/>
    </ligand>
</feature>
<feature type="binding site" evidence="1">
    <location>
        <begin position="379"/>
        <end position="382"/>
    </location>
    <ligand>
        <name>L-glutamine</name>
        <dbReference type="ChEBI" id="CHEBI:58359"/>
    </ligand>
</feature>
<feature type="binding site" evidence="1">
    <location>
        <position position="402"/>
    </location>
    <ligand>
        <name>L-glutamine</name>
        <dbReference type="ChEBI" id="CHEBI:58359"/>
    </ligand>
</feature>
<feature type="binding site" evidence="1">
    <location>
        <position position="469"/>
    </location>
    <ligand>
        <name>L-glutamine</name>
        <dbReference type="ChEBI" id="CHEBI:58359"/>
    </ligand>
</feature>